<proteinExistence type="evidence at protein level"/>
<feature type="signal peptide" evidence="1">
    <location>
        <begin position="1"/>
        <end position="22"/>
    </location>
</feature>
<feature type="propeptide" id="PRO_0000007084" evidence="12">
    <location>
        <begin position="23"/>
        <end position="42"/>
    </location>
</feature>
<feature type="peptide" id="PRO_0000007085" description="Plasticin-DA1" evidence="3">
    <location>
        <begin position="46"/>
        <end position="68"/>
    </location>
</feature>
<feature type="propeptide" id="PRO_0000007086" evidence="12">
    <location>
        <begin position="70"/>
        <end position="71"/>
    </location>
</feature>
<feature type="region of interest" description="Disordered" evidence="2">
    <location>
        <begin position="25"/>
        <end position="45"/>
    </location>
</feature>
<feature type="compositionally biased region" description="Acidic residues" evidence="2">
    <location>
        <begin position="30"/>
        <end position="40"/>
    </location>
</feature>
<feature type="modified residue" description="Glycine amide" evidence="3">
    <location>
        <position position="68"/>
    </location>
</feature>
<feature type="mutagenesis site" description="PD36K; Gain in antimicrobial activity and no change in hemolysis potency. PD36KF; Gain in antimicrobial activity and small increase in hemolysis potency." evidence="3 4">
    <original>N</original>
    <variation>K</variation>
    <location>
        <position position="53"/>
    </location>
</feature>
<feature type="mutagenesis site" description="PD36K; Gain in antimicrobial activity and no change in hemolysis potency. PD36KF; Gain in antimicrobial activity and small increase in hemolysis potency." evidence="3 4">
    <original>G</original>
    <variation>K</variation>
    <location>
        <position position="57"/>
    </location>
</feature>
<feature type="mutagenesis site" description="PD36KF; Gain in antimicrobial activity and small increase in hemolysis potency." evidence="3 4">
    <original>V</original>
    <variation>F</variation>
    <location>
        <position position="63"/>
    </location>
</feature>
<keyword id="KW-0027">Amidation</keyword>
<keyword id="KW-0878">Amphibian defense peptide</keyword>
<keyword id="KW-0165">Cleavage on pair of basic residues</keyword>
<keyword id="KW-0204">Cytolysis</keyword>
<keyword id="KW-0903">Direct protein sequencing</keyword>
<keyword id="KW-0354">Hemolysis</keyword>
<keyword id="KW-0472">Membrane</keyword>
<keyword id="KW-0964">Secreted</keyword>
<keyword id="KW-0732">Signal</keyword>
<keyword id="KW-1052">Target cell membrane</keyword>
<keyword id="KW-1053">Target membrane</keyword>
<accession>O93454</accession>
<protein>
    <recommendedName>
        <fullName evidence="8 9">Plasticin-DA1</fullName>
        <shortName evidence="8 9">PTC-DA1</shortName>
    </recommendedName>
    <alternativeName>
        <fullName evidence="6 10">Dermaseptin PD-3-6</fullName>
        <shortName evidence="6 7">DRP-PD3-6</shortName>
        <shortName evidence="7">PD36</shortName>
    </alternativeName>
</protein>
<name>PTC1_AGADC</name>
<reference key="1">
    <citation type="journal article" date="1998" name="Biochim. Biophys. Acta">
        <title>Cloning of cDNAs encoding new peptides of the dermaseptin-family.</title>
        <authorList>
            <person name="Wechselberger C."/>
        </authorList>
    </citation>
    <scope>NUCLEOTIDE SEQUENCE [MRNA]</scope>
    <source>
        <tissue>Skin</tissue>
    </source>
</reference>
<reference key="2">
    <citation type="journal article" date="2004" name="Biochemistry">
        <title>Membrane association, electrostatic sequestration, and cytotoxicity of Gly-Leu-rich peptide orthologs with differing functions.</title>
        <authorList>
            <person name="Vanhoye D."/>
            <person name="Bruston F."/>
            <person name="El Amri S."/>
            <person name="Ladram A."/>
            <person name="Amiche M."/>
            <person name="Nicolas P."/>
        </authorList>
    </citation>
    <scope>PROTEIN SEQUENCE OF 46-68</scope>
    <scope>FUNCTION</scope>
    <scope>AMIDATION AT GLY-68</scope>
    <scope>SYNTHESIS OF 46-68</scope>
    <scope>MUTAGENESIS OF ASN-53; GLY-57 AND VAL-63</scope>
    <scope>SUBCELLULAR LOCATION</scope>
    <source>
        <tissue>Skin</tissue>
    </source>
</reference>
<reference key="3">
    <citation type="journal article" date="2006" name="Biochemistry">
        <title>The plasticins: membrane adsorption, lipid disorders, and biological activity.</title>
        <authorList>
            <person name="El Amri C."/>
            <person name="Lacombe C."/>
            <person name="Zimmerman K."/>
            <person name="Ladram A."/>
            <person name="Amiche M."/>
            <person name="Nicolas P."/>
            <person name="Bruston F."/>
        </authorList>
    </citation>
    <scope>FUNCTION</scope>
    <scope>MUTAGENESIS OF ASN-53; GLY-57 AND VAL-63</scope>
    <scope>SYNTHESIS OF 46-78</scope>
</reference>
<reference key="4">
    <citation type="journal article" date="2008" name="Peptides">
        <title>A consistent nomenclature of antimicrobial peptides isolated from frogs of the subfamily Phyllomedusinae.</title>
        <authorList>
            <person name="Amiche M."/>
            <person name="Ladram A."/>
            <person name="Nicolas P."/>
        </authorList>
    </citation>
    <scope>NOMENCLATURE</scope>
</reference>
<reference key="5">
    <citation type="journal article" date="2015" name="Biophys. Chem.">
        <title>Investigating the role of GXXXG motifs in helical folding and self-association of plasticins, Gly/Leu-rich antimicrobial peptides.</title>
        <authorList>
            <person name="Carlier L."/>
            <person name="Joanne P."/>
            <person name="Khemtemourian L."/>
            <person name="Lacombe C."/>
            <person name="Nicolas P."/>
            <person name="El Amri C."/>
            <person name="Lequin O."/>
        </authorList>
    </citation>
    <scope>STRUCTURE BY NMR OF MUTANT PD36KF IN MEMBRANE-MIMETIC ENVIRONMENT</scope>
</reference>
<sequence length="71" mass="7781">MAFLKKSLFLVLFLALVPLSICEAEKREEENEEKQEDDDESEKKRGVVTDLLNTAGGLLGNLVGSLSGGER</sequence>
<comment type="function">
    <text evidence="3 4 13">Neutral peptide with no antimicrobial activity (PubMed:15222751, PubMed:17128968). Does not permeate bacterial membranes (PubMed:15222751). May act in synergy with cationic peptides by enhancing their activity (Probable). Has a moderate hemolytic activity (PubMed:15222751, PubMed:17128968). It interacts with zwitterionic phospholipids (DMPC) without perturbing either the interface or inside of the bilayer, whereas it causes little perturbations at the interface peptide-anionic vesicles (DMPG) as well as in the bilayer alkyl chains (PubMed:15222751, PubMed:17128968).</text>
</comment>
<comment type="subcellular location">
    <subcellularLocation>
        <location evidence="3">Secreted</location>
    </subcellularLocation>
    <subcellularLocation>
        <location evidence="12">Target cell membrane</location>
    </subcellularLocation>
</comment>
<comment type="tissue specificity">
    <text evidence="5">Expressed by the skin glands.</text>
</comment>
<comment type="domain">
    <text evidence="14">Plasticins have huge conformational plasticity. They can display random coil, alpha-helical, beta-sheet or beta-harpin structures.</text>
</comment>
<comment type="similarity">
    <text evidence="11">Belongs to the frog skin active peptide (FSAP) family. Plasticin subfamily.</text>
</comment>
<comment type="online information" name="The antimicrobial peptide database">
    <link uri="https://wangapd3.com/database/query_output.php?ID=1385"/>
</comment>
<dbReference type="EMBL" id="AJ005192">
    <property type="protein sequence ID" value="CAA06429.1"/>
    <property type="molecule type" value="mRNA"/>
</dbReference>
<dbReference type="GO" id="GO:0005576">
    <property type="term" value="C:extracellular region"/>
    <property type="evidence" value="ECO:0007669"/>
    <property type="project" value="UniProtKB-SubCell"/>
</dbReference>
<dbReference type="GO" id="GO:0016020">
    <property type="term" value="C:membrane"/>
    <property type="evidence" value="ECO:0007669"/>
    <property type="project" value="UniProtKB-KW"/>
</dbReference>
<dbReference type="GO" id="GO:0044218">
    <property type="term" value="C:other organism cell membrane"/>
    <property type="evidence" value="ECO:0007669"/>
    <property type="project" value="UniProtKB-KW"/>
</dbReference>
<dbReference type="GO" id="GO:0006952">
    <property type="term" value="P:defense response"/>
    <property type="evidence" value="ECO:0007669"/>
    <property type="project" value="UniProtKB-KW"/>
</dbReference>
<dbReference type="GO" id="GO:0031640">
    <property type="term" value="P:killing of cells of another organism"/>
    <property type="evidence" value="ECO:0007669"/>
    <property type="project" value="UniProtKB-KW"/>
</dbReference>
<dbReference type="InterPro" id="IPR004275">
    <property type="entry name" value="Frog_antimicrobial_propeptide"/>
</dbReference>
<dbReference type="InterPro" id="IPR016322">
    <property type="entry name" value="FSAP"/>
</dbReference>
<dbReference type="Pfam" id="PF03032">
    <property type="entry name" value="FSAP_sig_propep"/>
    <property type="match status" value="1"/>
</dbReference>
<dbReference type="PIRSF" id="PIRSF001822">
    <property type="entry name" value="Dermaseptin_precursor"/>
    <property type="match status" value="1"/>
</dbReference>
<evidence type="ECO:0000255" key="1"/>
<evidence type="ECO:0000256" key="2">
    <source>
        <dbReference type="SAM" id="MobiDB-lite"/>
    </source>
</evidence>
<evidence type="ECO:0000269" key="3">
    <source>
    </source>
</evidence>
<evidence type="ECO:0000269" key="4">
    <source>
    </source>
</evidence>
<evidence type="ECO:0000269" key="5">
    <source>
    </source>
</evidence>
<evidence type="ECO:0000303" key="6">
    <source>
    </source>
</evidence>
<evidence type="ECO:0000303" key="7">
    <source>
    </source>
</evidence>
<evidence type="ECO:0000303" key="8">
    <source>
    </source>
</evidence>
<evidence type="ECO:0000303" key="9">
    <source>
    </source>
</evidence>
<evidence type="ECO:0000303" key="10">
    <source>
    </source>
</evidence>
<evidence type="ECO:0000305" key="11"/>
<evidence type="ECO:0000305" key="12">
    <source>
    </source>
</evidence>
<evidence type="ECO:0000305" key="13">
    <source>
    </source>
</evidence>
<evidence type="ECO:0000305" key="14">
    <source>
    </source>
</evidence>
<organism>
    <name type="scientific">Agalychnis dacnicolor</name>
    <name type="common">Giant Mexican leaf frog</name>
    <name type="synonym">Pachymedusa dacnicolor</name>
    <dbReference type="NCBI Taxonomy" id="75988"/>
    <lineage>
        <taxon>Eukaryota</taxon>
        <taxon>Metazoa</taxon>
        <taxon>Chordata</taxon>
        <taxon>Craniata</taxon>
        <taxon>Vertebrata</taxon>
        <taxon>Euteleostomi</taxon>
        <taxon>Amphibia</taxon>
        <taxon>Batrachia</taxon>
        <taxon>Anura</taxon>
        <taxon>Neobatrachia</taxon>
        <taxon>Hyloidea</taxon>
        <taxon>Hylidae</taxon>
        <taxon>Phyllomedusinae</taxon>
        <taxon>Agalychnis</taxon>
    </lineage>
</organism>